<proteinExistence type="inferred from homology"/>
<sequence>MKKTIVLAYSGGLDTSAIIPWIKDNYNFDVVAFVADIGQSKKDLYKIKEKAIISGASDCYISDLKDIFVKKYVFPMLKTGAIYEGEYLLGTAIARPLIAKAQVDYAKKINAIGLCHGSTGKGNDQVRFELAYSALAPSLLVIAPWREWKFQSREDLLKYLKTKNIVTNVNKKKIYSRDENIFHVSTEGGILEDPWNPANEDCWFWTKSPLNAPNKPKKISLKIEKGCVVSINNKFFNEFNCLKRLNKIGAKHSIGRIDIVENRLIGMKSRGCYETPGGTIIYKALRSLEQLVFDRECMYWKNKIALQLSSIIYDGKWFTPIRKSLQKSSDILSSSISGKVVVELYKGSVRILQKKSLNSLYSKKYVTFGKDNVYNQIDAKGFIRLFSLSSRIRALKNKK</sequence>
<reference key="1">
    <citation type="journal article" date="2006" name="Science">
        <title>A small microbial genome: the end of a long symbiotic relationship?</title>
        <authorList>
            <person name="Perez-Brocal V."/>
            <person name="Gil R."/>
            <person name="Ramos S."/>
            <person name="Lamelas A."/>
            <person name="Postigo M."/>
            <person name="Michelena J.M."/>
            <person name="Silva F.J."/>
            <person name="Moya A."/>
            <person name="Latorre A."/>
        </authorList>
    </citation>
    <scope>NUCLEOTIDE SEQUENCE [LARGE SCALE GENOMIC DNA]</scope>
    <source>
        <strain>Cc</strain>
    </source>
</reference>
<comment type="catalytic activity">
    <reaction evidence="1">
        <text>L-citrulline + L-aspartate + ATP = 2-(N(omega)-L-arginino)succinate + AMP + diphosphate + H(+)</text>
        <dbReference type="Rhea" id="RHEA:10932"/>
        <dbReference type="ChEBI" id="CHEBI:15378"/>
        <dbReference type="ChEBI" id="CHEBI:29991"/>
        <dbReference type="ChEBI" id="CHEBI:30616"/>
        <dbReference type="ChEBI" id="CHEBI:33019"/>
        <dbReference type="ChEBI" id="CHEBI:57472"/>
        <dbReference type="ChEBI" id="CHEBI:57743"/>
        <dbReference type="ChEBI" id="CHEBI:456215"/>
        <dbReference type="EC" id="6.3.4.5"/>
    </reaction>
</comment>
<comment type="pathway">
    <text evidence="1">Amino-acid biosynthesis; L-arginine biosynthesis; L-arginine from L-ornithine and carbamoyl phosphate: step 2/3.</text>
</comment>
<comment type="subunit">
    <text evidence="1">Homotetramer.</text>
</comment>
<comment type="subcellular location">
    <subcellularLocation>
        <location evidence="1">Cytoplasm</location>
    </subcellularLocation>
</comment>
<comment type="similarity">
    <text evidence="1">Belongs to the argininosuccinate synthase family. Type 1 subfamily.</text>
</comment>
<keyword id="KW-0028">Amino-acid biosynthesis</keyword>
<keyword id="KW-0055">Arginine biosynthesis</keyword>
<keyword id="KW-0067">ATP-binding</keyword>
<keyword id="KW-0963">Cytoplasm</keyword>
<keyword id="KW-0436">Ligase</keyword>
<keyword id="KW-0547">Nucleotide-binding</keyword>
<keyword id="KW-1185">Reference proteome</keyword>
<feature type="chain" id="PRO_1000057038" description="Argininosuccinate synthase">
    <location>
        <begin position="1"/>
        <end position="399"/>
    </location>
</feature>
<feature type="binding site" evidence="1">
    <location>
        <begin position="8"/>
        <end position="16"/>
    </location>
    <ligand>
        <name>ATP</name>
        <dbReference type="ChEBI" id="CHEBI:30616"/>
    </ligand>
</feature>
<feature type="binding site" evidence="1">
    <location>
        <position position="35"/>
    </location>
    <ligand>
        <name>ATP</name>
        <dbReference type="ChEBI" id="CHEBI:30616"/>
    </ligand>
</feature>
<feature type="binding site" evidence="1">
    <location>
        <position position="87"/>
    </location>
    <ligand>
        <name>L-citrulline</name>
        <dbReference type="ChEBI" id="CHEBI:57743"/>
    </ligand>
</feature>
<feature type="binding site" evidence="1">
    <location>
        <position position="117"/>
    </location>
    <ligand>
        <name>ATP</name>
        <dbReference type="ChEBI" id="CHEBI:30616"/>
    </ligand>
</feature>
<feature type="binding site" evidence="1">
    <location>
        <position position="119"/>
    </location>
    <ligand>
        <name>L-aspartate</name>
        <dbReference type="ChEBI" id="CHEBI:29991"/>
    </ligand>
</feature>
<feature type="binding site" evidence="1">
    <location>
        <position position="123"/>
    </location>
    <ligand>
        <name>L-aspartate</name>
        <dbReference type="ChEBI" id="CHEBI:29991"/>
    </ligand>
</feature>
<feature type="binding site" evidence="1">
    <location>
        <position position="123"/>
    </location>
    <ligand>
        <name>L-citrulline</name>
        <dbReference type="ChEBI" id="CHEBI:57743"/>
    </ligand>
</feature>
<feature type="binding site" evidence="1">
    <location>
        <position position="124"/>
    </location>
    <ligand>
        <name>L-aspartate</name>
        <dbReference type="ChEBI" id="CHEBI:29991"/>
    </ligand>
</feature>
<feature type="binding site" evidence="1">
    <location>
        <position position="127"/>
    </location>
    <ligand>
        <name>L-citrulline</name>
        <dbReference type="ChEBI" id="CHEBI:57743"/>
    </ligand>
</feature>
<feature type="binding site" evidence="1">
    <location>
        <position position="176"/>
    </location>
    <ligand>
        <name>L-citrulline</name>
        <dbReference type="ChEBI" id="CHEBI:57743"/>
    </ligand>
</feature>
<feature type="binding site" evidence="1">
    <location>
        <position position="185"/>
    </location>
    <ligand>
        <name>L-citrulline</name>
        <dbReference type="ChEBI" id="CHEBI:57743"/>
    </ligand>
</feature>
<feature type="binding site" evidence="1">
    <location>
        <position position="261"/>
    </location>
    <ligand>
        <name>L-citrulline</name>
        <dbReference type="ChEBI" id="CHEBI:57743"/>
    </ligand>
</feature>
<feature type="binding site" evidence="1">
    <location>
        <position position="273"/>
    </location>
    <ligand>
        <name>L-citrulline</name>
        <dbReference type="ChEBI" id="CHEBI:57743"/>
    </ligand>
</feature>
<evidence type="ECO:0000255" key="1">
    <source>
        <dbReference type="HAMAP-Rule" id="MF_00005"/>
    </source>
</evidence>
<name>ASSY_BUCCC</name>
<organism>
    <name type="scientific">Buchnera aphidicola subsp. Cinara cedri (strain Cc)</name>
    <dbReference type="NCBI Taxonomy" id="372461"/>
    <lineage>
        <taxon>Bacteria</taxon>
        <taxon>Pseudomonadati</taxon>
        <taxon>Pseudomonadota</taxon>
        <taxon>Gammaproteobacteria</taxon>
        <taxon>Enterobacterales</taxon>
        <taxon>Erwiniaceae</taxon>
        <taxon>Buchnera</taxon>
    </lineage>
</organism>
<dbReference type="EC" id="6.3.4.5" evidence="1"/>
<dbReference type="EMBL" id="CP000263">
    <property type="protein sequence ID" value="ABJ90513.1"/>
    <property type="molecule type" value="Genomic_DNA"/>
</dbReference>
<dbReference type="RefSeq" id="WP_011672432.1">
    <property type="nucleotide sequence ID" value="NC_008513.1"/>
</dbReference>
<dbReference type="SMR" id="Q058D6"/>
<dbReference type="STRING" id="372461.BCc_032"/>
<dbReference type="KEGG" id="bcc:BCc_032"/>
<dbReference type="eggNOG" id="COG0137">
    <property type="taxonomic scope" value="Bacteria"/>
</dbReference>
<dbReference type="HOGENOM" id="CLU_032784_4_2_6"/>
<dbReference type="OrthoDB" id="9801641at2"/>
<dbReference type="UniPathway" id="UPA00068">
    <property type="reaction ID" value="UER00113"/>
</dbReference>
<dbReference type="Proteomes" id="UP000000669">
    <property type="component" value="Chromosome"/>
</dbReference>
<dbReference type="GO" id="GO:0005737">
    <property type="term" value="C:cytoplasm"/>
    <property type="evidence" value="ECO:0007669"/>
    <property type="project" value="UniProtKB-SubCell"/>
</dbReference>
<dbReference type="GO" id="GO:0004055">
    <property type="term" value="F:argininosuccinate synthase activity"/>
    <property type="evidence" value="ECO:0007669"/>
    <property type="project" value="UniProtKB-UniRule"/>
</dbReference>
<dbReference type="GO" id="GO:0005524">
    <property type="term" value="F:ATP binding"/>
    <property type="evidence" value="ECO:0007669"/>
    <property type="project" value="UniProtKB-UniRule"/>
</dbReference>
<dbReference type="GO" id="GO:0000053">
    <property type="term" value="P:argininosuccinate metabolic process"/>
    <property type="evidence" value="ECO:0007669"/>
    <property type="project" value="TreeGrafter"/>
</dbReference>
<dbReference type="GO" id="GO:0006526">
    <property type="term" value="P:L-arginine biosynthetic process"/>
    <property type="evidence" value="ECO:0007669"/>
    <property type="project" value="UniProtKB-UniRule"/>
</dbReference>
<dbReference type="GO" id="GO:0000050">
    <property type="term" value="P:urea cycle"/>
    <property type="evidence" value="ECO:0007669"/>
    <property type="project" value="TreeGrafter"/>
</dbReference>
<dbReference type="CDD" id="cd01999">
    <property type="entry name" value="ASS"/>
    <property type="match status" value="1"/>
</dbReference>
<dbReference type="FunFam" id="3.40.50.620:FF:000019">
    <property type="entry name" value="Argininosuccinate synthase"/>
    <property type="match status" value="1"/>
</dbReference>
<dbReference type="FunFam" id="3.90.1260.10:FF:000007">
    <property type="entry name" value="Argininosuccinate synthase"/>
    <property type="match status" value="1"/>
</dbReference>
<dbReference type="Gene3D" id="3.90.1260.10">
    <property type="entry name" value="Argininosuccinate synthetase, chain A, domain 2"/>
    <property type="match status" value="1"/>
</dbReference>
<dbReference type="Gene3D" id="3.40.50.620">
    <property type="entry name" value="HUPs"/>
    <property type="match status" value="1"/>
</dbReference>
<dbReference type="Gene3D" id="1.20.5.470">
    <property type="entry name" value="Single helix bin"/>
    <property type="match status" value="1"/>
</dbReference>
<dbReference type="HAMAP" id="MF_00005">
    <property type="entry name" value="Arg_succ_synth_type1"/>
    <property type="match status" value="1"/>
</dbReference>
<dbReference type="InterPro" id="IPR048268">
    <property type="entry name" value="Arginosuc_syn_C"/>
</dbReference>
<dbReference type="InterPro" id="IPR048267">
    <property type="entry name" value="Arginosuc_syn_N"/>
</dbReference>
<dbReference type="InterPro" id="IPR001518">
    <property type="entry name" value="Arginosuc_synth"/>
</dbReference>
<dbReference type="InterPro" id="IPR018223">
    <property type="entry name" value="Arginosuc_synth_CS"/>
</dbReference>
<dbReference type="InterPro" id="IPR023434">
    <property type="entry name" value="Arginosuc_synth_type_1_subfam"/>
</dbReference>
<dbReference type="InterPro" id="IPR024074">
    <property type="entry name" value="AS_cat/multimer_dom_body"/>
</dbReference>
<dbReference type="InterPro" id="IPR014729">
    <property type="entry name" value="Rossmann-like_a/b/a_fold"/>
</dbReference>
<dbReference type="NCBIfam" id="TIGR00032">
    <property type="entry name" value="argG"/>
    <property type="match status" value="1"/>
</dbReference>
<dbReference type="NCBIfam" id="NF001770">
    <property type="entry name" value="PRK00509.1"/>
    <property type="match status" value="1"/>
</dbReference>
<dbReference type="PANTHER" id="PTHR11587">
    <property type="entry name" value="ARGININOSUCCINATE SYNTHASE"/>
    <property type="match status" value="1"/>
</dbReference>
<dbReference type="PANTHER" id="PTHR11587:SF2">
    <property type="entry name" value="ARGININOSUCCINATE SYNTHASE"/>
    <property type="match status" value="1"/>
</dbReference>
<dbReference type="Pfam" id="PF20979">
    <property type="entry name" value="Arginosuc_syn_C"/>
    <property type="match status" value="1"/>
</dbReference>
<dbReference type="Pfam" id="PF00764">
    <property type="entry name" value="Arginosuc_synth"/>
    <property type="match status" value="1"/>
</dbReference>
<dbReference type="SUPFAM" id="SSF52402">
    <property type="entry name" value="Adenine nucleotide alpha hydrolases-like"/>
    <property type="match status" value="1"/>
</dbReference>
<dbReference type="SUPFAM" id="SSF69864">
    <property type="entry name" value="Argininosuccinate synthetase, C-terminal domain"/>
    <property type="match status" value="1"/>
</dbReference>
<dbReference type="PROSITE" id="PS00564">
    <property type="entry name" value="ARGININOSUCCIN_SYN_1"/>
    <property type="match status" value="1"/>
</dbReference>
<dbReference type="PROSITE" id="PS00565">
    <property type="entry name" value="ARGININOSUCCIN_SYN_2"/>
    <property type="match status" value="1"/>
</dbReference>
<accession>Q058D6</accession>
<protein>
    <recommendedName>
        <fullName evidence="1">Argininosuccinate synthase</fullName>
        <ecNumber evidence="1">6.3.4.5</ecNumber>
    </recommendedName>
    <alternativeName>
        <fullName evidence="1">Citrulline--aspartate ligase</fullName>
    </alternativeName>
</protein>
<gene>
    <name evidence="1" type="primary">argG</name>
    <name type="ordered locus">BCc_032</name>
</gene>